<gene>
    <name evidence="1" type="primary">mdcC</name>
    <name type="ordered locus">bll0269</name>
</gene>
<sequence length="105" mass="11207">MEDLSFRHPVRARADGARRSAIVGIVASGNLEVLVERVLPDAECAIDIKTAAVGFGEVWRAVIGDFVERYSPGGLKFSINDGGARPDTVSLRLAQAVRSIAENGQ</sequence>
<comment type="function">
    <text evidence="1">Subunit of malonate decarboxylase, it is an acyl carrier protein to which acetyl and malonyl thioester residues are bound via a 2'-(5''-phosphoribosyl)-3'-dephospho-CoA prosthetic group and turn over during the catalytic mechanism.</text>
</comment>
<comment type="subcellular location">
    <subcellularLocation>
        <location evidence="1">Cytoplasm</location>
    </subcellularLocation>
</comment>
<comment type="PTM">
    <text evidence="1">Covalently binds the prosthetic group of malonate decarboxylase.</text>
</comment>
<comment type="similarity">
    <text evidence="1">Belongs to the MdcC family.</text>
</comment>
<accession>Q89XN9</accession>
<name>MDCC_BRADU</name>
<dbReference type="EMBL" id="BA000040">
    <property type="protein sequence ID" value="BAC45534.1"/>
    <property type="molecule type" value="Genomic_DNA"/>
</dbReference>
<dbReference type="RefSeq" id="NP_766909.1">
    <property type="nucleotide sequence ID" value="NC_004463.1"/>
</dbReference>
<dbReference type="RefSeq" id="WP_011083101.1">
    <property type="nucleotide sequence ID" value="NC_004463.1"/>
</dbReference>
<dbReference type="SMR" id="Q89XN9"/>
<dbReference type="STRING" id="224911.AAV28_40590"/>
<dbReference type="EnsemblBacteria" id="BAC45534">
    <property type="protein sequence ID" value="BAC45534"/>
    <property type="gene ID" value="BAC45534"/>
</dbReference>
<dbReference type="GeneID" id="46495420"/>
<dbReference type="KEGG" id="bja:bll0269"/>
<dbReference type="PATRIC" id="fig|224911.44.peg.8790"/>
<dbReference type="eggNOG" id="COG3052">
    <property type="taxonomic scope" value="Bacteria"/>
</dbReference>
<dbReference type="HOGENOM" id="CLU_173135_0_0_5"/>
<dbReference type="InParanoid" id="Q89XN9"/>
<dbReference type="OrthoDB" id="120290at2"/>
<dbReference type="PhylomeDB" id="Q89XN9"/>
<dbReference type="Proteomes" id="UP000002526">
    <property type="component" value="Chromosome"/>
</dbReference>
<dbReference type="GO" id="GO:0005737">
    <property type="term" value="C:cytoplasm"/>
    <property type="evidence" value="ECO:0007669"/>
    <property type="project" value="UniProtKB-SubCell"/>
</dbReference>
<dbReference type="GO" id="GO:0000036">
    <property type="term" value="F:acyl carrier activity"/>
    <property type="evidence" value="ECO:0007669"/>
    <property type="project" value="UniProtKB-UniRule"/>
</dbReference>
<dbReference type="HAMAP" id="MF_00710">
    <property type="entry name" value="Malonate_deCO2ase_dsu"/>
    <property type="match status" value="1"/>
</dbReference>
<dbReference type="InterPro" id="IPR023439">
    <property type="entry name" value="Mal_deCO2ase/Cit_lyase_ACP"/>
</dbReference>
<dbReference type="InterPro" id="IPR009662">
    <property type="entry name" value="Malonate_deCO2ase_dsu"/>
</dbReference>
<dbReference type="NCBIfam" id="TIGR03130">
    <property type="entry name" value="malonate_delta"/>
    <property type="match status" value="1"/>
</dbReference>
<dbReference type="Pfam" id="PF06857">
    <property type="entry name" value="ACP"/>
    <property type="match status" value="1"/>
</dbReference>
<feature type="chain" id="PRO_0000220283" description="Malonate decarboxylase acyl carrier protein">
    <location>
        <begin position="1"/>
        <end position="105"/>
    </location>
</feature>
<feature type="modified residue" description="O-(phosphoribosyl dephospho-coenzyme A)serine" evidence="1">
    <location>
        <position position="28"/>
    </location>
</feature>
<proteinExistence type="inferred from homology"/>
<keyword id="KW-0963">Cytoplasm</keyword>
<keyword id="KW-0597">Phosphoprotein</keyword>
<keyword id="KW-1185">Reference proteome</keyword>
<evidence type="ECO:0000255" key="1">
    <source>
        <dbReference type="HAMAP-Rule" id="MF_00710"/>
    </source>
</evidence>
<organism>
    <name type="scientific">Bradyrhizobium diazoefficiens (strain JCM 10833 / BCRC 13528 / IAM 13628 / NBRC 14792 / USDA 110)</name>
    <dbReference type="NCBI Taxonomy" id="224911"/>
    <lineage>
        <taxon>Bacteria</taxon>
        <taxon>Pseudomonadati</taxon>
        <taxon>Pseudomonadota</taxon>
        <taxon>Alphaproteobacteria</taxon>
        <taxon>Hyphomicrobiales</taxon>
        <taxon>Nitrobacteraceae</taxon>
        <taxon>Bradyrhizobium</taxon>
    </lineage>
</organism>
<protein>
    <recommendedName>
        <fullName evidence="1">Malonate decarboxylase acyl carrier protein</fullName>
    </recommendedName>
    <alternativeName>
        <fullName evidence="1">Malonate decarboxylase subunit delta</fullName>
    </alternativeName>
</protein>
<reference key="1">
    <citation type="journal article" date="2002" name="DNA Res.">
        <title>Complete genomic sequence of nitrogen-fixing symbiotic bacterium Bradyrhizobium japonicum USDA110.</title>
        <authorList>
            <person name="Kaneko T."/>
            <person name="Nakamura Y."/>
            <person name="Sato S."/>
            <person name="Minamisawa K."/>
            <person name="Uchiumi T."/>
            <person name="Sasamoto S."/>
            <person name="Watanabe A."/>
            <person name="Idesawa K."/>
            <person name="Iriguchi M."/>
            <person name="Kawashima K."/>
            <person name="Kohara M."/>
            <person name="Matsumoto M."/>
            <person name="Shimpo S."/>
            <person name="Tsuruoka H."/>
            <person name="Wada T."/>
            <person name="Yamada M."/>
            <person name="Tabata S."/>
        </authorList>
    </citation>
    <scope>NUCLEOTIDE SEQUENCE [LARGE SCALE GENOMIC DNA]</scope>
    <source>
        <strain>JCM 10833 / BCRC 13528 / IAM 13628 / NBRC 14792 / USDA 110</strain>
    </source>
</reference>